<comment type="catalytic activity">
    <reaction>
        <text>XMP + L-glutamine + ATP + H2O = GMP + L-glutamate + AMP + diphosphate + 2 H(+)</text>
        <dbReference type="Rhea" id="RHEA:11680"/>
        <dbReference type="ChEBI" id="CHEBI:15377"/>
        <dbReference type="ChEBI" id="CHEBI:15378"/>
        <dbReference type="ChEBI" id="CHEBI:29985"/>
        <dbReference type="ChEBI" id="CHEBI:30616"/>
        <dbReference type="ChEBI" id="CHEBI:33019"/>
        <dbReference type="ChEBI" id="CHEBI:57464"/>
        <dbReference type="ChEBI" id="CHEBI:58115"/>
        <dbReference type="ChEBI" id="CHEBI:58359"/>
        <dbReference type="ChEBI" id="CHEBI:456215"/>
        <dbReference type="EC" id="6.3.5.2"/>
    </reaction>
</comment>
<comment type="pathway">
    <text>Purine metabolism; GMP biosynthesis; GMP from XMP (L-Gln route): step 1/1.</text>
</comment>
<comment type="subunit">
    <text evidence="1">Homodimer.</text>
</comment>
<comment type="developmental stage">
    <text>Produced during growth but not during development.</text>
</comment>
<name>GUAA_DICDI</name>
<organism>
    <name type="scientific">Dictyostelium discoideum</name>
    <name type="common">Social amoeba</name>
    <dbReference type="NCBI Taxonomy" id="44689"/>
    <lineage>
        <taxon>Eukaryota</taxon>
        <taxon>Amoebozoa</taxon>
        <taxon>Evosea</taxon>
        <taxon>Eumycetozoa</taxon>
        <taxon>Dictyostelia</taxon>
        <taxon>Dictyosteliales</taxon>
        <taxon>Dictyosteliaceae</taxon>
        <taxon>Dictyostelium</taxon>
    </lineage>
</organism>
<protein>
    <recommendedName>
        <fullName>GMP synthase [glutamine-hydrolyzing]</fullName>
        <ecNumber>6.3.5.2</ecNumber>
    </recommendedName>
    <alternativeName>
        <fullName>GMP synthetase</fullName>
    </alternativeName>
    <alternativeName>
        <fullName>Glutamine amidotransferase</fullName>
    </alternativeName>
</protein>
<sequence length="718" mass="79562">MTITSPVIKTPPLNSEIRLESNLTVESGDIEINEKDIVNASEVIVILDAGSQYSKVIDRRVRELNVASEIHPLNIDLLELIKIKSKSGSTIKGIIISGGPESVYGENAPKFDKSLFSEKLNLPIFGICYGMQLMNYIFGGKVESNSQREDGVHNIEILKDENQQLVSKLFKNLNQTEQVLLTHGDSVTKIADGFKIICKSDDGIVSGIENERLGYYGVQFHPEVDLTTNGKKMFSNFLIDICGCSANYTLDDREQQAITYIKSIVSNKKVLVLVSGGVDSTVCAALISKAIGPENVIALHIDNGFMRKDESLNVEKALSVLGLHLIVVDASQTFYNSTTTIKGHLTSSLKETISPEERRKIIGDTFMRVAENEVKKLGLQPEDVYLAQGTLRPDLIESSSKTVSGVADVIKTHHNDTELVRILRDSGRVVEPLKDYHKDEVRELGKSLGLSDSLVWRQPFPGPGLAIRIICADEPYLVNYDFTNNVVQYLVTGEASSELESEVKIKIDKQLTEMKCKRQDKITIKPVLLPIQTVGVQGDGRTYSYLLGLYSSENSTIDQIPWSYIFNLARTIPKICHNINRVVFIFSQNATKHTNIKVSNEPVKHITPTRLTPDVIKQLQHADSIVSEQLYKYNLIKSLSQVPVVSLPIDFGVTGNRSIAIRTFITNDFMTGVPAIPGKNISFDCLQEITNNILTSVNGISKVLFDCTSKPPGTTEFL</sequence>
<accession>P32073</accession>
<accession>Q54TQ7</accession>
<keyword id="KW-0067">ATP-binding</keyword>
<keyword id="KW-0315">Glutamine amidotransferase</keyword>
<keyword id="KW-0332">GMP biosynthesis</keyword>
<keyword id="KW-0436">Ligase</keyword>
<keyword id="KW-0547">Nucleotide-binding</keyword>
<keyword id="KW-0658">Purine biosynthesis</keyword>
<keyword id="KW-1185">Reference proteome</keyword>
<evidence type="ECO:0000250" key="1"/>
<evidence type="ECO:0000255" key="2">
    <source>
        <dbReference type="PROSITE-ProRule" id="PRU00605"/>
    </source>
</evidence>
<evidence type="ECO:0000255" key="3">
    <source>
        <dbReference type="PROSITE-ProRule" id="PRU00886"/>
    </source>
</evidence>
<evidence type="ECO:0000305" key="4"/>
<reference key="1">
    <citation type="journal article" date="1991" name="J. Biol. Chem.">
        <title>Functional cloning of a Dictyostelium discoideum cDNA encoding GMP synthetase.</title>
        <authorList>
            <person name="van Lookeren Campagne M.M."/>
            <person name="Franke J."/>
            <person name="Kessin R.H."/>
        </authorList>
    </citation>
    <scope>NUCLEOTIDE SEQUENCE [MRNA]</scope>
    <source>
        <strain>AX3</strain>
    </source>
</reference>
<reference key="2">
    <citation type="journal article" date="2005" name="Nature">
        <title>The genome of the social amoeba Dictyostelium discoideum.</title>
        <authorList>
            <person name="Eichinger L."/>
            <person name="Pachebat J.A."/>
            <person name="Gloeckner G."/>
            <person name="Rajandream M.A."/>
            <person name="Sucgang R."/>
            <person name="Berriman M."/>
            <person name="Song J."/>
            <person name="Olsen R."/>
            <person name="Szafranski K."/>
            <person name="Xu Q."/>
            <person name="Tunggal B."/>
            <person name="Kummerfeld S."/>
            <person name="Madera M."/>
            <person name="Konfortov B.A."/>
            <person name="Rivero F."/>
            <person name="Bankier A.T."/>
            <person name="Lehmann R."/>
            <person name="Hamlin N."/>
            <person name="Davies R."/>
            <person name="Gaudet P."/>
            <person name="Fey P."/>
            <person name="Pilcher K."/>
            <person name="Chen G."/>
            <person name="Saunders D."/>
            <person name="Sodergren E.J."/>
            <person name="Davis P."/>
            <person name="Kerhornou A."/>
            <person name="Nie X."/>
            <person name="Hall N."/>
            <person name="Anjard C."/>
            <person name="Hemphill L."/>
            <person name="Bason N."/>
            <person name="Farbrother P."/>
            <person name="Desany B."/>
            <person name="Just E."/>
            <person name="Morio T."/>
            <person name="Rost R."/>
            <person name="Churcher C.M."/>
            <person name="Cooper J."/>
            <person name="Haydock S."/>
            <person name="van Driessche N."/>
            <person name="Cronin A."/>
            <person name="Goodhead I."/>
            <person name="Muzny D.M."/>
            <person name="Mourier T."/>
            <person name="Pain A."/>
            <person name="Lu M."/>
            <person name="Harper D."/>
            <person name="Lindsay R."/>
            <person name="Hauser H."/>
            <person name="James K.D."/>
            <person name="Quiles M."/>
            <person name="Madan Babu M."/>
            <person name="Saito T."/>
            <person name="Buchrieser C."/>
            <person name="Wardroper A."/>
            <person name="Felder M."/>
            <person name="Thangavelu M."/>
            <person name="Johnson D."/>
            <person name="Knights A."/>
            <person name="Loulseged H."/>
            <person name="Mungall K.L."/>
            <person name="Oliver K."/>
            <person name="Price C."/>
            <person name="Quail M.A."/>
            <person name="Urushihara H."/>
            <person name="Hernandez J."/>
            <person name="Rabbinowitsch E."/>
            <person name="Steffen D."/>
            <person name="Sanders M."/>
            <person name="Ma J."/>
            <person name="Kohara Y."/>
            <person name="Sharp S."/>
            <person name="Simmonds M.N."/>
            <person name="Spiegler S."/>
            <person name="Tivey A."/>
            <person name="Sugano S."/>
            <person name="White B."/>
            <person name="Walker D."/>
            <person name="Woodward J.R."/>
            <person name="Winckler T."/>
            <person name="Tanaka Y."/>
            <person name="Shaulsky G."/>
            <person name="Schleicher M."/>
            <person name="Weinstock G.M."/>
            <person name="Rosenthal A."/>
            <person name="Cox E.C."/>
            <person name="Chisholm R.L."/>
            <person name="Gibbs R.A."/>
            <person name="Loomis W.F."/>
            <person name="Platzer M."/>
            <person name="Kay R.R."/>
            <person name="Williams J.G."/>
            <person name="Dear P.H."/>
            <person name="Noegel A.A."/>
            <person name="Barrell B.G."/>
            <person name="Kuspa A."/>
        </authorList>
    </citation>
    <scope>NUCLEOTIDE SEQUENCE [LARGE SCALE GENOMIC DNA]</scope>
    <source>
        <strain>AX4</strain>
    </source>
</reference>
<reference key="3">
    <citation type="journal article" date="2006" name="Mol. Cell. Proteomics">
        <title>Proteomics fingerprinting of phagosome maturation and evidence for the role of a Galpha during uptake.</title>
        <authorList>
            <person name="Gotthardt D."/>
            <person name="Blancheteau V."/>
            <person name="Bosserhoff A."/>
            <person name="Ruppert T."/>
            <person name="Delorenzi M."/>
            <person name="Soldati T."/>
        </authorList>
    </citation>
    <scope>IDENTIFICATION BY MASS SPECTROMETRY [LARGE SCALE ANALYSIS]</scope>
    <source>
        <strain>AX2</strain>
    </source>
</reference>
<dbReference type="EC" id="6.3.5.2"/>
<dbReference type="EMBL" id="M64282">
    <property type="protein sequence ID" value="AAA33213.1"/>
    <property type="molecule type" value="mRNA"/>
</dbReference>
<dbReference type="EMBL" id="AAFI02000042">
    <property type="protein sequence ID" value="EAL66537.1"/>
    <property type="molecule type" value="Genomic_DNA"/>
</dbReference>
<dbReference type="PIR" id="A41164">
    <property type="entry name" value="A41164"/>
</dbReference>
<dbReference type="RefSeq" id="XP_640534.1">
    <property type="nucleotide sequence ID" value="XM_635442.1"/>
</dbReference>
<dbReference type="SMR" id="P32073"/>
<dbReference type="FunCoup" id="P32073">
    <property type="interactions" value="1081"/>
</dbReference>
<dbReference type="STRING" id="44689.P32073"/>
<dbReference type="MEROPS" id="C26.962"/>
<dbReference type="PaxDb" id="44689-DDB0215334"/>
<dbReference type="EnsemblProtists" id="EAL66537">
    <property type="protein sequence ID" value="EAL66537"/>
    <property type="gene ID" value="DDB_G0281551"/>
</dbReference>
<dbReference type="GeneID" id="8623144"/>
<dbReference type="KEGG" id="ddi:DDB_G0281551"/>
<dbReference type="dictyBase" id="DDB_G0281551">
    <property type="gene designation" value="guaA"/>
</dbReference>
<dbReference type="VEuPathDB" id="AmoebaDB:DDB_G0281551"/>
<dbReference type="eggNOG" id="KOG1622">
    <property type="taxonomic scope" value="Eukaryota"/>
</dbReference>
<dbReference type="HOGENOM" id="CLU_014340_0_2_1"/>
<dbReference type="InParanoid" id="P32073"/>
<dbReference type="OMA" id="VVMSHFD"/>
<dbReference type="PhylomeDB" id="P32073"/>
<dbReference type="Reactome" id="R-DDI-73817">
    <property type="pathway name" value="Purine ribonucleoside monophosphate biosynthesis"/>
</dbReference>
<dbReference type="Reactome" id="R-DDI-9748787">
    <property type="pathway name" value="Azathioprine ADME"/>
</dbReference>
<dbReference type="UniPathway" id="UPA00189">
    <property type="reaction ID" value="UER00296"/>
</dbReference>
<dbReference type="PRO" id="PR:P32073"/>
<dbReference type="Proteomes" id="UP000002195">
    <property type="component" value="Chromosome 3"/>
</dbReference>
<dbReference type="GO" id="GO:0005829">
    <property type="term" value="C:cytosol"/>
    <property type="evidence" value="ECO:0000318"/>
    <property type="project" value="GO_Central"/>
</dbReference>
<dbReference type="GO" id="GO:0045335">
    <property type="term" value="C:phagocytic vesicle"/>
    <property type="evidence" value="ECO:0007005"/>
    <property type="project" value="dictyBase"/>
</dbReference>
<dbReference type="GO" id="GO:0005524">
    <property type="term" value="F:ATP binding"/>
    <property type="evidence" value="ECO:0007669"/>
    <property type="project" value="UniProtKB-KW"/>
</dbReference>
<dbReference type="GO" id="GO:0003922">
    <property type="term" value="F:GMP synthase (glutamine-hydrolyzing) activity"/>
    <property type="evidence" value="ECO:0000250"/>
    <property type="project" value="dictyBase"/>
</dbReference>
<dbReference type="GO" id="GO:0003921">
    <property type="term" value="F:GMP synthase activity"/>
    <property type="evidence" value="ECO:0000318"/>
    <property type="project" value="GO_Central"/>
</dbReference>
<dbReference type="GO" id="GO:0006177">
    <property type="term" value="P:GMP biosynthetic process"/>
    <property type="evidence" value="ECO:0000250"/>
    <property type="project" value="dictyBase"/>
</dbReference>
<dbReference type="GO" id="GO:0046037">
    <property type="term" value="P:GMP metabolic process"/>
    <property type="evidence" value="ECO:0000250"/>
    <property type="project" value="dictyBase"/>
</dbReference>
<dbReference type="CDD" id="cd01742">
    <property type="entry name" value="GATase1_GMP_Synthase"/>
    <property type="match status" value="1"/>
</dbReference>
<dbReference type="CDD" id="cd01997">
    <property type="entry name" value="GMP_synthase_C"/>
    <property type="match status" value="1"/>
</dbReference>
<dbReference type="FunFam" id="3.30.300.10:FF:000027">
    <property type="entry name" value="GMP synthase (Glutamine-hydrolysing)"/>
    <property type="match status" value="1"/>
</dbReference>
<dbReference type="FunFam" id="3.40.50.620:FF:000044">
    <property type="entry name" value="GMP synthase [glutamine-hydrolyzing]"/>
    <property type="match status" value="1"/>
</dbReference>
<dbReference type="FunFam" id="3.40.50.880:FF:000013">
    <property type="entry name" value="GMP synthase [glutamine-hydrolyzing]"/>
    <property type="match status" value="1"/>
</dbReference>
<dbReference type="Gene3D" id="3.30.300.10">
    <property type="match status" value="2"/>
</dbReference>
<dbReference type="Gene3D" id="3.40.50.880">
    <property type="match status" value="1"/>
</dbReference>
<dbReference type="Gene3D" id="3.40.50.620">
    <property type="entry name" value="HUPs"/>
    <property type="match status" value="1"/>
</dbReference>
<dbReference type="InterPro" id="IPR029062">
    <property type="entry name" value="Class_I_gatase-like"/>
</dbReference>
<dbReference type="InterPro" id="IPR017926">
    <property type="entry name" value="GATASE"/>
</dbReference>
<dbReference type="InterPro" id="IPR001674">
    <property type="entry name" value="GMP_synth_C"/>
</dbReference>
<dbReference type="InterPro" id="IPR004739">
    <property type="entry name" value="GMP_synth_GATase"/>
</dbReference>
<dbReference type="InterPro" id="IPR025777">
    <property type="entry name" value="GMPS_ATP_PPase_dom"/>
</dbReference>
<dbReference type="InterPro" id="IPR022310">
    <property type="entry name" value="NAD/GMP_synthase"/>
</dbReference>
<dbReference type="InterPro" id="IPR014729">
    <property type="entry name" value="Rossmann-like_a/b/a_fold"/>
</dbReference>
<dbReference type="NCBIfam" id="TIGR00888">
    <property type="entry name" value="guaA_Nterm"/>
    <property type="match status" value="1"/>
</dbReference>
<dbReference type="NCBIfam" id="NF000848">
    <property type="entry name" value="PRK00074.1"/>
    <property type="match status" value="1"/>
</dbReference>
<dbReference type="PANTHER" id="PTHR11922:SF2">
    <property type="entry name" value="GMP SYNTHASE [GLUTAMINE-HYDROLYZING]"/>
    <property type="match status" value="1"/>
</dbReference>
<dbReference type="PANTHER" id="PTHR11922">
    <property type="entry name" value="GMP SYNTHASE-RELATED"/>
    <property type="match status" value="1"/>
</dbReference>
<dbReference type="Pfam" id="PF00117">
    <property type="entry name" value="GATase"/>
    <property type="match status" value="1"/>
</dbReference>
<dbReference type="Pfam" id="PF00958">
    <property type="entry name" value="GMP_synt_C"/>
    <property type="match status" value="1"/>
</dbReference>
<dbReference type="Pfam" id="PF02540">
    <property type="entry name" value="NAD_synthase"/>
    <property type="match status" value="1"/>
</dbReference>
<dbReference type="PRINTS" id="PR00097">
    <property type="entry name" value="ANTSNTHASEII"/>
</dbReference>
<dbReference type="PRINTS" id="PR00096">
    <property type="entry name" value="GATASE"/>
</dbReference>
<dbReference type="SUPFAM" id="SSF52402">
    <property type="entry name" value="Adenine nucleotide alpha hydrolases-like"/>
    <property type="match status" value="1"/>
</dbReference>
<dbReference type="SUPFAM" id="SSF52317">
    <property type="entry name" value="Class I glutamine amidotransferase-like"/>
    <property type="match status" value="1"/>
</dbReference>
<dbReference type="SUPFAM" id="SSF54810">
    <property type="entry name" value="GMP synthetase C-terminal dimerisation domain"/>
    <property type="match status" value="2"/>
</dbReference>
<dbReference type="PROSITE" id="PS51273">
    <property type="entry name" value="GATASE_TYPE_1"/>
    <property type="match status" value="1"/>
</dbReference>
<dbReference type="PROSITE" id="PS51553">
    <property type="entry name" value="GMPS_ATP_PPASE"/>
    <property type="match status" value="1"/>
</dbReference>
<proteinExistence type="evidence at protein level"/>
<gene>
    <name type="primary">guaA</name>
    <name type="synonym">gua2</name>
    <name type="ORF">DDB_G0281551</name>
</gene>
<feature type="chain" id="PRO_0000140256" description="GMP synthase [glutamine-hydrolyzing]">
    <location>
        <begin position="1"/>
        <end position="718"/>
    </location>
</feature>
<feature type="domain" description="Glutamine amidotransferase type-1" evidence="2">
    <location>
        <begin position="43"/>
        <end position="247"/>
    </location>
</feature>
<feature type="domain" description="GMPS ATP-PPase" evidence="3">
    <location>
        <begin position="248"/>
        <end position="457"/>
    </location>
</feature>
<feature type="active site" description="For GATase activity" evidence="2">
    <location>
        <position position="128"/>
    </location>
</feature>
<feature type="active site" description="For GATase activity" evidence="2">
    <location>
        <position position="221"/>
    </location>
</feature>
<feature type="active site" description="For GATase activity" evidence="2">
    <location>
        <position position="223"/>
    </location>
</feature>
<feature type="binding site" evidence="3">
    <location>
        <begin position="275"/>
        <end position="281"/>
    </location>
    <ligand>
        <name>ATP</name>
        <dbReference type="ChEBI" id="CHEBI:30616"/>
    </ligand>
</feature>
<feature type="sequence conflict" description="In Ref. 1; AAA33213." evidence="4" ref="1">
    <original>G</original>
    <variation>V</variation>
    <location>
        <position position="535"/>
    </location>
</feature>